<proteinExistence type="inferred from homology"/>
<gene>
    <name evidence="1" type="primary">rfcS2</name>
    <name type="ordered locus">Pars_1846</name>
</gene>
<dbReference type="EMBL" id="CP000660">
    <property type="protein sequence ID" value="ABP51397.1"/>
    <property type="molecule type" value="Genomic_DNA"/>
</dbReference>
<dbReference type="SMR" id="A4WLY0"/>
<dbReference type="STRING" id="340102.Pars_1846"/>
<dbReference type="KEGG" id="pas:Pars_1846"/>
<dbReference type="HOGENOM" id="CLU_042324_2_1_2"/>
<dbReference type="OrthoDB" id="7928at2157"/>
<dbReference type="PhylomeDB" id="A4WLY0"/>
<dbReference type="Proteomes" id="UP000001567">
    <property type="component" value="Chromosome"/>
</dbReference>
<dbReference type="GO" id="GO:0005663">
    <property type="term" value="C:DNA replication factor C complex"/>
    <property type="evidence" value="ECO:0007669"/>
    <property type="project" value="InterPro"/>
</dbReference>
<dbReference type="GO" id="GO:0005524">
    <property type="term" value="F:ATP binding"/>
    <property type="evidence" value="ECO:0007669"/>
    <property type="project" value="UniProtKB-UniRule"/>
</dbReference>
<dbReference type="GO" id="GO:0016887">
    <property type="term" value="F:ATP hydrolysis activity"/>
    <property type="evidence" value="ECO:0007669"/>
    <property type="project" value="InterPro"/>
</dbReference>
<dbReference type="GO" id="GO:0003677">
    <property type="term" value="F:DNA binding"/>
    <property type="evidence" value="ECO:0007669"/>
    <property type="project" value="InterPro"/>
</dbReference>
<dbReference type="GO" id="GO:0003689">
    <property type="term" value="F:DNA clamp loader activity"/>
    <property type="evidence" value="ECO:0007669"/>
    <property type="project" value="UniProtKB-UniRule"/>
</dbReference>
<dbReference type="GO" id="GO:0006281">
    <property type="term" value="P:DNA repair"/>
    <property type="evidence" value="ECO:0007669"/>
    <property type="project" value="TreeGrafter"/>
</dbReference>
<dbReference type="GO" id="GO:0006261">
    <property type="term" value="P:DNA-templated DNA replication"/>
    <property type="evidence" value="ECO:0007669"/>
    <property type="project" value="TreeGrafter"/>
</dbReference>
<dbReference type="CDD" id="cd00009">
    <property type="entry name" value="AAA"/>
    <property type="match status" value="1"/>
</dbReference>
<dbReference type="CDD" id="cd18140">
    <property type="entry name" value="HLD_clamp_RFC"/>
    <property type="match status" value="1"/>
</dbReference>
<dbReference type="FunFam" id="3.40.50.300:FF:000952">
    <property type="entry name" value="Replication factor C subunit 2"/>
    <property type="match status" value="1"/>
</dbReference>
<dbReference type="FunFam" id="1.10.8.60:FF:000012">
    <property type="entry name" value="Replication factor C subunit 4"/>
    <property type="match status" value="1"/>
</dbReference>
<dbReference type="Gene3D" id="1.10.8.60">
    <property type="match status" value="1"/>
</dbReference>
<dbReference type="Gene3D" id="1.20.272.10">
    <property type="match status" value="1"/>
</dbReference>
<dbReference type="Gene3D" id="3.40.50.300">
    <property type="entry name" value="P-loop containing nucleotide triphosphate hydrolases"/>
    <property type="match status" value="1"/>
</dbReference>
<dbReference type="HAMAP" id="MF_01509">
    <property type="entry name" value="RfcS"/>
    <property type="match status" value="1"/>
</dbReference>
<dbReference type="InterPro" id="IPR003593">
    <property type="entry name" value="AAA+_ATPase"/>
</dbReference>
<dbReference type="InterPro" id="IPR003959">
    <property type="entry name" value="ATPase_AAA_core"/>
</dbReference>
<dbReference type="InterPro" id="IPR008921">
    <property type="entry name" value="DNA_pol3_clamp-load_cplx_C"/>
</dbReference>
<dbReference type="InterPro" id="IPR050238">
    <property type="entry name" value="DNA_Rep/Repair_Clamp_Loader"/>
</dbReference>
<dbReference type="InterPro" id="IPR027417">
    <property type="entry name" value="P-loop_NTPase"/>
</dbReference>
<dbReference type="InterPro" id="IPR023748">
    <property type="entry name" value="Rep_factor-C_ssu_arc"/>
</dbReference>
<dbReference type="InterPro" id="IPR013748">
    <property type="entry name" value="Rep_factorC_C"/>
</dbReference>
<dbReference type="InterPro" id="IPR047854">
    <property type="entry name" value="RFC_lid"/>
</dbReference>
<dbReference type="NCBIfam" id="NF001679">
    <property type="entry name" value="PRK00440.1"/>
    <property type="match status" value="1"/>
</dbReference>
<dbReference type="PANTHER" id="PTHR11669">
    <property type="entry name" value="REPLICATION FACTOR C / DNA POLYMERASE III GAMMA-TAU SUBUNIT"/>
    <property type="match status" value="1"/>
</dbReference>
<dbReference type="PANTHER" id="PTHR11669:SF20">
    <property type="entry name" value="REPLICATION FACTOR C SUBUNIT 4"/>
    <property type="match status" value="1"/>
</dbReference>
<dbReference type="Pfam" id="PF00004">
    <property type="entry name" value="AAA"/>
    <property type="match status" value="1"/>
</dbReference>
<dbReference type="Pfam" id="PF25361">
    <property type="entry name" value="AAA_lid_RFC1"/>
    <property type="match status" value="1"/>
</dbReference>
<dbReference type="Pfam" id="PF08542">
    <property type="entry name" value="Rep_fac_C"/>
    <property type="match status" value="1"/>
</dbReference>
<dbReference type="SMART" id="SM00382">
    <property type="entry name" value="AAA"/>
    <property type="match status" value="1"/>
</dbReference>
<dbReference type="SUPFAM" id="SSF52540">
    <property type="entry name" value="P-loop containing nucleoside triphosphate hydrolases"/>
    <property type="match status" value="1"/>
</dbReference>
<dbReference type="SUPFAM" id="SSF48019">
    <property type="entry name" value="post-AAA+ oligomerization domain-like"/>
    <property type="match status" value="1"/>
</dbReference>
<evidence type="ECO:0000255" key="1">
    <source>
        <dbReference type="HAMAP-Rule" id="MF_01509"/>
    </source>
</evidence>
<reference key="1">
    <citation type="submission" date="2007-04" db="EMBL/GenBank/DDBJ databases">
        <title>Complete sequence of Pyrobaculum arsenaticum DSM 13514.</title>
        <authorList>
            <consortium name="US DOE Joint Genome Institute"/>
            <person name="Copeland A."/>
            <person name="Lucas S."/>
            <person name="Lapidus A."/>
            <person name="Barry K."/>
            <person name="Glavina del Rio T."/>
            <person name="Dalin E."/>
            <person name="Tice H."/>
            <person name="Pitluck S."/>
            <person name="Chain P."/>
            <person name="Malfatti S."/>
            <person name="Shin M."/>
            <person name="Vergez L."/>
            <person name="Schmutz J."/>
            <person name="Larimer F."/>
            <person name="Land M."/>
            <person name="Hauser L."/>
            <person name="Kyrpides N."/>
            <person name="Mikhailova N."/>
            <person name="Cozen A.E."/>
            <person name="Fitz-Gibbon S.T."/>
            <person name="House C.H."/>
            <person name="Saltikov C."/>
            <person name="Lowe T.M."/>
            <person name="Richardson P."/>
        </authorList>
    </citation>
    <scope>NUCLEOTIDE SEQUENCE [LARGE SCALE GENOMIC DNA]</scope>
    <source>
        <strain>ATCC 700994 / DSM 13514 / JCM 11321 / PZ6</strain>
    </source>
</reference>
<comment type="function">
    <text evidence="1">Part of the RFC clamp loader complex which loads the PCNA sliding clamp onto DNA.</text>
</comment>
<comment type="subunit">
    <text evidence="1">Heteromultimer composed of small subunits (RfcS) and large subunits (RfcL).</text>
</comment>
<comment type="similarity">
    <text evidence="1">Belongs to the activator 1 small subunits family. RfcS subfamily.</text>
</comment>
<keyword id="KW-0067">ATP-binding</keyword>
<keyword id="KW-0235">DNA replication</keyword>
<keyword id="KW-0547">Nucleotide-binding</keyword>
<name>RFCS2_PYRAR</name>
<feature type="chain" id="PRO_0000296652" description="Replication factor C small subunit 2">
    <location>
        <begin position="1"/>
        <end position="322"/>
    </location>
</feature>
<feature type="binding site" evidence="1">
    <location>
        <begin position="44"/>
        <end position="51"/>
    </location>
    <ligand>
        <name>ATP</name>
        <dbReference type="ChEBI" id="CHEBI:30616"/>
    </ligand>
</feature>
<protein>
    <recommendedName>
        <fullName evidence="1">Replication factor C small subunit 2</fullName>
        <shortName evidence="1">RFC small subunit 2</shortName>
    </recommendedName>
    <alternativeName>
        <fullName evidence="1">Clamp loader small subunit 2</fullName>
    </alternativeName>
</protein>
<sequence>MSELFWFEKYRPRSFDEVVDLEEVKARLREFVRGGNMPHLLFYGPPGTGKTTMALVLARELYGEYWRENTLELNASDERGINVIRERVKEFARTAPVGKAPFKLVILDEADNMTSDAQQALRRIMEMYAQNTRFILLANYISGIIEPIQSRTVMIRFSPLPKEAVFARLRYIADNEGVKISDDALEAIYEFTQGDMRRAINALQIAATTGKEITEETVAKALGMVSPRLLRETLNDAFRGNFGKAATQIYGFVVDGGIGELEIVKQLHREALKLDVPEYLKPEIAYIIAEAHYAILRGAHGLTQIYGALAKIRKLLKYTASI</sequence>
<accession>A4WLY0</accession>
<organism>
    <name type="scientific">Pyrobaculum arsenaticum (strain DSM 13514 / JCM 11321 / PZ6)</name>
    <dbReference type="NCBI Taxonomy" id="340102"/>
    <lineage>
        <taxon>Archaea</taxon>
        <taxon>Thermoproteota</taxon>
        <taxon>Thermoprotei</taxon>
        <taxon>Thermoproteales</taxon>
        <taxon>Thermoproteaceae</taxon>
        <taxon>Pyrobaculum</taxon>
    </lineage>
</organism>